<keyword id="KW-0378">Hydrolase</keyword>
<keyword id="KW-0460">Magnesium</keyword>
<keyword id="KW-0479">Metal-binding</keyword>
<keyword id="KW-0704">Schiff base</keyword>
<protein>
    <recommendedName>
        <fullName evidence="1">Phosphonoacetaldehyde hydrolase</fullName>
        <shortName evidence="1">Phosphonatase</shortName>
        <ecNumber evidence="1">3.11.1.1</ecNumber>
    </recommendedName>
    <alternativeName>
        <fullName evidence="1">Phosphonoacetaldehyde phosphonohydrolase</fullName>
    </alternativeName>
</protein>
<reference key="1">
    <citation type="journal article" date="2004" name="Proc. Natl. Acad. Sci. U.S.A.">
        <title>Genomic analysis of Bacteroides fragilis reveals extensive DNA inversions regulating cell surface adaptation.</title>
        <authorList>
            <person name="Kuwahara T."/>
            <person name="Yamashita A."/>
            <person name="Hirakawa H."/>
            <person name="Nakayama H."/>
            <person name="Toh H."/>
            <person name="Okada N."/>
            <person name="Kuhara S."/>
            <person name="Hattori M."/>
            <person name="Hayashi T."/>
            <person name="Ohnishi Y."/>
        </authorList>
    </citation>
    <scope>NUCLEOTIDE SEQUENCE [LARGE SCALE GENOMIC DNA]</scope>
    <source>
        <strain>YCH46</strain>
    </source>
</reference>
<evidence type="ECO:0000255" key="1">
    <source>
        <dbReference type="HAMAP-Rule" id="MF_01375"/>
    </source>
</evidence>
<feature type="chain" id="PRO_0000284581" description="Phosphonoacetaldehyde hydrolase">
    <location>
        <begin position="1"/>
        <end position="263"/>
    </location>
</feature>
<feature type="active site" description="Nucleophile" evidence="1">
    <location>
        <position position="10"/>
    </location>
</feature>
<feature type="active site" description="Schiff-base intermediate with substrate" evidence="1">
    <location>
        <position position="51"/>
    </location>
</feature>
<feature type="binding site" evidence="1">
    <location>
        <position position="10"/>
    </location>
    <ligand>
        <name>Mg(2+)</name>
        <dbReference type="ChEBI" id="CHEBI:18420"/>
    </ligand>
</feature>
<feature type="binding site" evidence="1">
    <location>
        <position position="12"/>
    </location>
    <ligand>
        <name>Mg(2+)</name>
        <dbReference type="ChEBI" id="CHEBI:18420"/>
    </ligand>
</feature>
<feature type="binding site" evidence="1">
    <location>
        <position position="184"/>
    </location>
    <ligand>
        <name>Mg(2+)</name>
        <dbReference type="ChEBI" id="CHEBI:18420"/>
    </ligand>
</feature>
<sequence length="263" mass="29268">MKKIECIIMDWAGTAVDYGCFAPVAAFIKAFAGKGLTIDVEQTRKPMGLPKIQHIRELLTMPEVNEQFINRYRRAWTEEDVVELNHLFEKYLFASLKEYTDPIPGVIPTLEKLRAEGLKIGSTTGYTREMMDVVLPEAQAKGYRVDYCATPNLLPAGRPAPYMIFENLTKLAVPDPDTVVKVGDTIADIQEGVHAKVWSVGVVLGSNEMALTEEETHALPAAELENRIAEVKQRMLAAGASYVIRSIEELPALIQLINSKLNH</sequence>
<organism>
    <name type="scientific">Bacteroides fragilis (strain YCH46)</name>
    <dbReference type="NCBI Taxonomy" id="295405"/>
    <lineage>
        <taxon>Bacteria</taxon>
        <taxon>Pseudomonadati</taxon>
        <taxon>Bacteroidota</taxon>
        <taxon>Bacteroidia</taxon>
        <taxon>Bacteroidales</taxon>
        <taxon>Bacteroidaceae</taxon>
        <taxon>Bacteroides</taxon>
    </lineage>
</organism>
<dbReference type="EC" id="3.11.1.1" evidence="1"/>
<dbReference type="EMBL" id="AP006841">
    <property type="protein sequence ID" value="BAD50439.1"/>
    <property type="molecule type" value="Genomic_DNA"/>
</dbReference>
<dbReference type="RefSeq" id="WP_005797923.1">
    <property type="nucleotide sequence ID" value="NZ_UYXF01000029.1"/>
</dbReference>
<dbReference type="RefSeq" id="YP_100973.1">
    <property type="nucleotide sequence ID" value="NC_006347.1"/>
</dbReference>
<dbReference type="SMR" id="Q64PZ2"/>
<dbReference type="STRING" id="295405.BF3696"/>
<dbReference type="GeneID" id="60370026"/>
<dbReference type="KEGG" id="bfr:BF3696"/>
<dbReference type="PATRIC" id="fig|295405.11.peg.3547"/>
<dbReference type="HOGENOM" id="CLU_045011_12_0_10"/>
<dbReference type="OrthoDB" id="5504491at2"/>
<dbReference type="Proteomes" id="UP000002197">
    <property type="component" value="Chromosome"/>
</dbReference>
<dbReference type="GO" id="GO:0005829">
    <property type="term" value="C:cytosol"/>
    <property type="evidence" value="ECO:0007669"/>
    <property type="project" value="TreeGrafter"/>
</dbReference>
<dbReference type="GO" id="GO:0000287">
    <property type="term" value="F:magnesium ion binding"/>
    <property type="evidence" value="ECO:0007669"/>
    <property type="project" value="UniProtKB-UniRule"/>
</dbReference>
<dbReference type="GO" id="GO:0008967">
    <property type="term" value="F:phosphoglycolate phosphatase activity"/>
    <property type="evidence" value="ECO:0007669"/>
    <property type="project" value="TreeGrafter"/>
</dbReference>
<dbReference type="GO" id="GO:0050194">
    <property type="term" value="F:phosphonoacetaldehyde hydrolase activity"/>
    <property type="evidence" value="ECO:0007669"/>
    <property type="project" value="UniProtKB-UniRule"/>
</dbReference>
<dbReference type="GO" id="GO:0006281">
    <property type="term" value="P:DNA repair"/>
    <property type="evidence" value="ECO:0007669"/>
    <property type="project" value="TreeGrafter"/>
</dbReference>
<dbReference type="GO" id="GO:0019700">
    <property type="term" value="P:organic phosphonate catabolic process"/>
    <property type="evidence" value="ECO:0007669"/>
    <property type="project" value="InterPro"/>
</dbReference>
<dbReference type="CDD" id="cd02586">
    <property type="entry name" value="HAD_PHN"/>
    <property type="match status" value="1"/>
</dbReference>
<dbReference type="Gene3D" id="3.40.50.1000">
    <property type="entry name" value="HAD superfamily/HAD-like"/>
    <property type="match status" value="1"/>
</dbReference>
<dbReference type="Gene3D" id="1.10.150.240">
    <property type="entry name" value="Putative phosphatase, domain 2"/>
    <property type="match status" value="1"/>
</dbReference>
<dbReference type="HAMAP" id="MF_01375">
    <property type="entry name" value="PhnX"/>
    <property type="match status" value="1"/>
</dbReference>
<dbReference type="InterPro" id="IPR050155">
    <property type="entry name" value="HAD-like_hydrolase_sf"/>
</dbReference>
<dbReference type="InterPro" id="IPR036412">
    <property type="entry name" value="HAD-like_sf"/>
</dbReference>
<dbReference type="InterPro" id="IPR023214">
    <property type="entry name" value="HAD_sf"/>
</dbReference>
<dbReference type="InterPro" id="IPR023198">
    <property type="entry name" value="PGP-like_dom2"/>
</dbReference>
<dbReference type="InterPro" id="IPR006323">
    <property type="entry name" value="Phosphonoacetald_hydro"/>
</dbReference>
<dbReference type="NCBIfam" id="TIGR01422">
    <property type="entry name" value="phosphonatase"/>
    <property type="match status" value="1"/>
</dbReference>
<dbReference type="PANTHER" id="PTHR43434">
    <property type="entry name" value="PHOSPHOGLYCOLATE PHOSPHATASE"/>
    <property type="match status" value="1"/>
</dbReference>
<dbReference type="PANTHER" id="PTHR43434:SF19">
    <property type="entry name" value="PHOSPHONOACETALDEHYDE HYDROLASE"/>
    <property type="match status" value="1"/>
</dbReference>
<dbReference type="Pfam" id="PF00702">
    <property type="entry name" value="Hydrolase"/>
    <property type="match status" value="1"/>
</dbReference>
<dbReference type="SFLD" id="SFLDG01135">
    <property type="entry name" value="C1.5.6:_HAD__Beta-PGM__Phospha"/>
    <property type="match status" value="1"/>
</dbReference>
<dbReference type="SFLD" id="SFLDS00003">
    <property type="entry name" value="Haloacid_Dehalogenase"/>
    <property type="match status" value="1"/>
</dbReference>
<dbReference type="SUPFAM" id="SSF56784">
    <property type="entry name" value="HAD-like"/>
    <property type="match status" value="1"/>
</dbReference>
<comment type="function">
    <text evidence="1">Involved in phosphonate degradation.</text>
</comment>
<comment type="catalytic activity">
    <reaction evidence="1">
        <text>phosphonoacetaldehyde + H2O = acetaldehyde + phosphate + H(+)</text>
        <dbReference type="Rhea" id="RHEA:18905"/>
        <dbReference type="ChEBI" id="CHEBI:15343"/>
        <dbReference type="ChEBI" id="CHEBI:15377"/>
        <dbReference type="ChEBI" id="CHEBI:15378"/>
        <dbReference type="ChEBI" id="CHEBI:43474"/>
        <dbReference type="ChEBI" id="CHEBI:58383"/>
        <dbReference type="EC" id="3.11.1.1"/>
    </reaction>
</comment>
<comment type="cofactor">
    <cofactor evidence="1">
        <name>Mg(2+)</name>
        <dbReference type="ChEBI" id="CHEBI:18420"/>
    </cofactor>
    <text evidence="1">Binds 1 Mg(2+) ion per subunit.</text>
</comment>
<comment type="subunit">
    <text evidence="1">Homodimer.</text>
</comment>
<comment type="similarity">
    <text evidence="1">Belongs to the HAD-like hydrolase superfamily. PhnX family.</text>
</comment>
<accession>Q64PZ2</accession>
<proteinExistence type="inferred from homology"/>
<name>PHNX_BACFR</name>
<gene>
    <name evidence="1" type="primary">phnX</name>
    <name type="ordered locus">BF3696</name>
</gene>